<sequence>MKQLEELLSTSFDIQFNDLTLLETAFTHTSYANEHRLLNVSHNERLEFLGDAVLQLIISEYLFAKYPKKTEGDMSKLRSMIVREESLAGFSRFCSFDAYIKLGKGEEKSGGRRRDTILGDLFEAFLGALLLDKGIDAVRRFLKQVMIPQVEKGNFERVKDYKTCLQEFLQTKGDVVIDYQVISEKGPAHAKQFEVSIVVNGAVLSKGLGKSKKLAEQDAAKNALAQLSEV</sequence>
<organism>
    <name type="scientific">Streptococcus pyogenes serotype M5 (strain Manfredo)</name>
    <dbReference type="NCBI Taxonomy" id="160491"/>
    <lineage>
        <taxon>Bacteria</taxon>
        <taxon>Bacillati</taxon>
        <taxon>Bacillota</taxon>
        <taxon>Bacilli</taxon>
        <taxon>Lactobacillales</taxon>
        <taxon>Streptococcaceae</taxon>
        <taxon>Streptococcus</taxon>
    </lineage>
</organism>
<gene>
    <name evidence="1" type="primary">rnc</name>
    <name type="ordered locus">SpyM51426</name>
</gene>
<comment type="function">
    <text evidence="1">Digests double-stranded RNA. Involved in the processing of primary rRNA transcript to yield the immediate precursors to the large and small rRNAs (23S and 16S). Processes some mRNAs, and tRNAs when they are encoded in the rRNA operon. Processes pre-crRNA and tracrRNA of type II CRISPR loci if present in the organism.</text>
</comment>
<comment type="catalytic activity">
    <reaction evidence="1">
        <text>Endonucleolytic cleavage to 5'-phosphomonoester.</text>
        <dbReference type="EC" id="3.1.26.3"/>
    </reaction>
</comment>
<comment type="cofactor">
    <cofactor evidence="1">
        <name>Mg(2+)</name>
        <dbReference type="ChEBI" id="CHEBI:18420"/>
    </cofactor>
</comment>
<comment type="subunit">
    <text evidence="1">Homodimer.</text>
</comment>
<comment type="subcellular location">
    <subcellularLocation>
        <location evidence="1">Cytoplasm</location>
    </subcellularLocation>
</comment>
<comment type="similarity">
    <text evidence="1">Belongs to the ribonuclease III family.</text>
</comment>
<name>RNC_STRPG</name>
<proteinExistence type="inferred from homology"/>
<dbReference type="EC" id="3.1.26.3" evidence="1"/>
<dbReference type="EMBL" id="AM295007">
    <property type="protein sequence ID" value="CAM30747.1"/>
    <property type="molecule type" value="Genomic_DNA"/>
</dbReference>
<dbReference type="RefSeq" id="WP_002985639.1">
    <property type="nucleotide sequence ID" value="NC_009332.1"/>
</dbReference>
<dbReference type="SMR" id="A2RFW8"/>
<dbReference type="GeneID" id="69901246"/>
<dbReference type="KEGG" id="spf:SpyM51426"/>
<dbReference type="HOGENOM" id="CLU_000907_1_3_9"/>
<dbReference type="GO" id="GO:0005737">
    <property type="term" value="C:cytoplasm"/>
    <property type="evidence" value="ECO:0007669"/>
    <property type="project" value="UniProtKB-SubCell"/>
</dbReference>
<dbReference type="GO" id="GO:0003725">
    <property type="term" value="F:double-stranded RNA binding"/>
    <property type="evidence" value="ECO:0007669"/>
    <property type="project" value="TreeGrafter"/>
</dbReference>
<dbReference type="GO" id="GO:0046872">
    <property type="term" value="F:metal ion binding"/>
    <property type="evidence" value="ECO:0007669"/>
    <property type="project" value="UniProtKB-KW"/>
</dbReference>
<dbReference type="GO" id="GO:0004525">
    <property type="term" value="F:ribonuclease III activity"/>
    <property type="evidence" value="ECO:0007669"/>
    <property type="project" value="UniProtKB-UniRule"/>
</dbReference>
<dbReference type="GO" id="GO:0019843">
    <property type="term" value="F:rRNA binding"/>
    <property type="evidence" value="ECO:0007669"/>
    <property type="project" value="UniProtKB-KW"/>
</dbReference>
<dbReference type="GO" id="GO:0006397">
    <property type="term" value="P:mRNA processing"/>
    <property type="evidence" value="ECO:0007669"/>
    <property type="project" value="UniProtKB-UniRule"/>
</dbReference>
<dbReference type="GO" id="GO:0010468">
    <property type="term" value="P:regulation of gene expression"/>
    <property type="evidence" value="ECO:0007669"/>
    <property type="project" value="TreeGrafter"/>
</dbReference>
<dbReference type="GO" id="GO:0006364">
    <property type="term" value="P:rRNA processing"/>
    <property type="evidence" value="ECO:0007669"/>
    <property type="project" value="UniProtKB-UniRule"/>
</dbReference>
<dbReference type="GO" id="GO:0008033">
    <property type="term" value="P:tRNA processing"/>
    <property type="evidence" value="ECO:0007669"/>
    <property type="project" value="UniProtKB-KW"/>
</dbReference>
<dbReference type="CDD" id="cd10845">
    <property type="entry name" value="DSRM_RNAse_III_family"/>
    <property type="match status" value="1"/>
</dbReference>
<dbReference type="CDD" id="cd00593">
    <property type="entry name" value="RIBOc"/>
    <property type="match status" value="1"/>
</dbReference>
<dbReference type="FunFam" id="1.10.1520.10:FF:000001">
    <property type="entry name" value="Ribonuclease 3"/>
    <property type="match status" value="1"/>
</dbReference>
<dbReference type="FunFam" id="3.30.160.20:FF:000003">
    <property type="entry name" value="Ribonuclease 3"/>
    <property type="match status" value="1"/>
</dbReference>
<dbReference type="Gene3D" id="3.30.160.20">
    <property type="match status" value="1"/>
</dbReference>
<dbReference type="Gene3D" id="1.10.1520.10">
    <property type="entry name" value="Ribonuclease III domain"/>
    <property type="match status" value="1"/>
</dbReference>
<dbReference type="HAMAP" id="MF_00104">
    <property type="entry name" value="RNase_III"/>
    <property type="match status" value="1"/>
</dbReference>
<dbReference type="InterPro" id="IPR014720">
    <property type="entry name" value="dsRBD_dom"/>
</dbReference>
<dbReference type="InterPro" id="IPR011907">
    <property type="entry name" value="RNase_III"/>
</dbReference>
<dbReference type="InterPro" id="IPR000999">
    <property type="entry name" value="RNase_III_dom"/>
</dbReference>
<dbReference type="InterPro" id="IPR036389">
    <property type="entry name" value="RNase_III_sf"/>
</dbReference>
<dbReference type="NCBIfam" id="TIGR02191">
    <property type="entry name" value="RNaseIII"/>
    <property type="match status" value="1"/>
</dbReference>
<dbReference type="PANTHER" id="PTHR11207:SF0">
    <property type="entry name" value="RIBONUCLEASE 3"/>
    <property type="match status" value="1"/>
</dbReference>
<dbReference type="PANTHER" id="PTHR11207">
    <property type="entry name" value="RIBONUCLEASE III"/>
    <property type="match status" value="1"/>
</dbReference>
<dbReference type="Pfam" id="PF00035">
    <property type="entry name" value="dsrm"/>
    <property type="match status" value="1"/>
</dbReference>
<dbReference type="Pfam" id="PF14622">
    <property type="entry name" value="Ribonucleas_3_3"/>
    <property type="match status" value="1"/>
</dbReference>
<dbReference type="SMART" id="SM00358">
    <property type="entry name" value="DSRM"/>
    <property type="match status" value="1"/>
</dbReference>
<dbReference type="SMART" id="SM00535">
    <property type="entry name" value="RIBOc"/>
    <property type="match status" value="1"/>
</dbReference>
<dbReference type="SUPFAM" id="SSF54768">
    <property type="entry name" value="dsRNA-binding domain-like"/>
    <property type="match status" value="1"/>
</dbReference>
<dbReference type="SUPFAM" id="SSF69065">
    <property type="entry name" value="RNase III domain-like"/>
    <property type="match status" value="1"/>
</dbReference>
<dbReference type="PROSITE" id="PS50137">
    <property type="entry name" value="DS_RBD"/>
    <property type="match status" value="1"/>
</dbReference>
<dbReference type="PROSITE" id="PS00517">
    <property type="entry name" value="RNASE_3_1"/>
    <property type="match status" value="1"/>
</dbReference>
<dbReference type="PROSITE" id="PS50142">
    <property type="entry name" value="RNASE_3_2"/>
    <property type="match status" value="1"/>
</dbReference>
<accession>A2RFW8</accession>
<protein>
    <recommendedName>
        <fullName evidence="1">Ribonuclease 3</fullName>
        <ecNumber evidence="1">3.1.26.3</ecNumber>
    </recommendedName>
    <alternativeName>
        <fullName evidence="1">Ribonuclease III</fullName>
        <shortName evidence="1">RNase III</shortName>
    </alternativeName>
</protein>
<feature type="chain" id="PRO_1000075839" description="Ribonuclease 3">
    <location>
        <begin position="1"/>
        <end position="230"/>
    </location>
</feature>
<feature type="domain" description="RNase III" evidence="1">
    <location>
        <begin position="1"/>
        <end position="134"/>
    </location>
</feature>
<feature type="domain" description="DRBM" evidence="1">
    <location>
        <begin position="160"/>
        <end position="229"/>
    </location>
</feature>
<feature type="active site" evidence="1">
    <location>
        <position position="51"/>
    </location>
</feature>
<feature type="active site" evidence="1">
    <location>
        <position position="123"/>
    </location>
</feature>
<feature type="binding site" evidence="1">
    <location>
        <position position="47"/>
    </location>
    <ligand>
        <name>Mg(2+)</name>
        <dbReference type="ChEBI" id="CHEBI:18420"/>
    </ligand>
</feature>
<feature type="binding site" evidence="1">
    <location>
        <position position="120"/>
    </location>
    <ligand>
        <name>Mg(2+)</name>
        <dbReference type="ChEBI" id="CHEBI:18420"/>
    </ligand>
</feature>
<feature type="binding site" evidence="1">
    <location>
        <position position="123"/>
    </location>
    <ligand>
        <name>Mg(2+)</name>
        <dbReference type="ChEBI" id="CHEBI:18420"/>
    </ligand>
</feature>
<keyword id="KW-0963">Cytoplasm</keyword>
<keyword id="KW-0255">Endonuclease</keyword>
<keyword id="KW-0378">Hydrolase</keyword>
<keyword id="KW-0460">Magnesium</keyword>
<keyword id="KW-0479">Metal-binding</keyword>
<keyword id="KW-0507">mRNA processing</keyword>
<keyword id="KW-0540">Nuclease</keyword>
<keyword id="KW-0694">RNA-binding</keyword>
<keyword id="KW-0698">rRNA processing</keyword>
<keyword id="KW-0699">rRNA-binding</keyword>
<keyword id="KW-0819">tRNA processing</keyword>
<evidence type="ECO:0000255" key="1">
    <source>
        <dbReference type="HAMAP-Rule" id="MF_00104"/>
    </source>
</evidence>
<reference key="1">
    <citation type="journal article" date="2007" name="J. Bacteriol.">
        <title>Complete genome of acute rheumatic fever-associated serotype M5 Streptococcus pyogenes strain Manfredo.</title>
        <authorList>
            <person name="Holden M.T.G."/>
            <person name="Scott A."/>
            <person name="Cherevach I."/>
            <person name="Chillingworth T."/>
            <person name="Churcher C."/>
            <person name="Cronin A."/>
            <person name="Dowd L."/>
            <person name="Feltwell T."/>
            <person name="Hamlin N."/>
            <person name="Holroyd S."/>
            <person name="Jagels K."/>
            <person name="Moule S."/>
            <person name="Mungall K."/>
            <person name="Quail M.A."/>
            <person name="Price C."/>
            <person name="Rabbinowitsch E."/>
            <person name="Sharp S."/>
            <person name="Skelton J."/>
            <person name="Whitehead S."/>
            <person name="Barrell B.G."/>
            <person name="Kehoe M."/>
            <person name="Parkhill J."/>
        </authorList>
    </citation>
    <scope>NUCLEOTIDE SEQUENCE [LARGE SCALE GENOMIC DNA]</scope>
    <source>
        <strain>Manfredo</strain>
    </source>
</reference>